<accession>A1E9S5</accession>
<protein>
    <recommendedName>
        <fullName evidence="1">Photosystem I assembly protein Ycf3</fullName>
    </recommendedName>
</protein>
<proteinExistence type="inferred from homology"/>
<comment type="function">
    <text evidence="1">Essential for the assembly of the photosystem I (PSI) complex. May act as a chaperone-like factor to guide the assembly of the PSI subunits.</text>
</comment>
<comment type="subcellular location">
    <subcellularLocation>
        <location evidence="1">Plastid</location>
        <location evidence="1">Chloroplast thylakoid membrane</location>
        <topology evidence="1">Peripheral membrane protein</topology>
    </subcellularLocation>
</comment>
<comment type="similarity">
    <text evidence="1">Belongs to the Ycf3 family.</text>
</comment>
<geneLocation type="chloroplast"/>
<sequence>MPRSRINGNFIDKTSSIVANILLQIIPTTSGEKRAFTYYRDGAIMLAQSEGNYAEALQNYYEATRLEIDPYDRSYILYNIGLIHTSNGEHTKALEYYFRALERNPFLPQAFNNMAVICHYRGEQAILQGDSEIAEAWFDQAAEYWKQAIALTPGNYIEAQNWLKITKRFEFE</sequence>
<dbReference type="EMBL" id="EF115542">
    <property type="protein sequence ID" value="ABK79497.1"/>
    <property type="molecule type" value="Genomic_DNA"/>
</dbReference>
<dbReference type="RefSeq" id="YP_899408.2">
    <property type="nucleotide sequence ID" value="NC_008602.1"/>
</dbReference>
<dbReference type="SMR" id="A1E9S5"/>
<dbReference type="FunCoup" id="A1E9S5">
    <property type="interactions" value="26"/>
</dbReference>
<dbReference type="STRING" id="4558.A1E9S5"/>
<dbReference type="GeneID" id="4549121"/>
<dbReference type="KEGG" id="sbi:4549121"/>
<dbReference type="InParanoid" id="A1E9S5"/>
<dbReference type="OrthoDB" id="613316at2759"/>
<dbReference type="Proteomes" id="UP000000768">
    <property type="component" value="Chloroplast"/>
</dbReference>
<dbReference type="GO" id="GO:0009535">
    <property type="term" value="C:chloroplast thylakoid membrane"/>
    <property type="evidence" value="ECO:0007669"/>
    <property type="project" value="UniProtKB-SubCell"/>
</dbReference>
<dbReference type="GO" id="GO:0048564">
    <property type="term" value="P:photosystem I assembly"/>
    <property type="evidence" value="ECO:0000318"/>
    <property type="project" value="GO_Central"/>
</dbReference>
<dbReference type="FunFam" id="1.25.40.10:FF:000004">
    <property type="entry name" value="Photosystem I assembly protein Ycf3"/>
    <property type="match status" value="1"/>
</dbReference>
<dbReference type="Gene3D" id="1.25.40.10">
    <property type="entry name" value="Tetratricopeptide repeat domain"/>
    <property type="match status" value="1"/>
</dbReference>
<dbReference type="HAMAP" id="MF_00439">
    <property type="entry name" value="Ycf3"/>
    <property type="match status" value="1"/>
</dbReference>
<dbReference type="InterPro" id="IPR022818">
    <property type="entry name" value="PSI_Ycf3_assembly"/>
</dbReference>
<dbReference type="InterPro" id="IPR011990">
    <property type="entry name" value="TPR-like_helical_dom_sf"/>
</dbReference>
<dbReference type="InterPro" id="IPR019734">
    <property type="entry name" value="TPR_rpt"/>
</dbReference>
<dbReference type="InterPro" id="IPR051685">
    <property type="entry name" value="Ycf3/AcsC/BcsC/TPR_MFPF"/>
</dbReference>
<dbReference type="NCBIfam" id="NF002725">
    <property type="entry name" value="PRK02603.1"/>
    <property type="match status" value="1"/>
</dbReference>
<dbReference type="PANTHER" id="PTHR44943">
    <property type="entry name" value="CELLULOSE SYNTHASE OPERON PROTEIN C"/>
    <property type="match status" value="1"/>
</dbReference>
<dbReference type="PANTHER" id="PTHR44943:SF8">
    <property type="entry name" value="TPR REPEAT-CONTAINING PROTEIN MJ0263"/>
    <property type="match status" value="1"/>
</dbReference>
<dbReference type="Pfam" id="PF00515">
    <property type="entry name" value="TPR_1"/>
    <property type="match status" value="1"/>
</dbReference>
<dbReference type="SMART" id="SM00028">
    <property type="entry name" value="TPR"/>
    <property type="match status" value="3"/>
</dbReference>
<dbReference type="SUPFAM" id="SSF48452">
    <property type="entry name" value="TPR-like"/>
    <property type="match status" value="1"/>
</dbReference>
<dbReference type="PROSITE" id="PS50005">
    <property type="entry name" value="TPR"/>
    <property type="match status" value="2"/>
</dbReference>
<dbReference type="PROSITE" id="PS50293">
    <property type="entry name" value="TPR_REGION"/>
    <property type="match status" value="1"/>
</dbReference>
<keyword id="KW-0150">Chloroplast</keyword>
<keyword id="KW-0472">Membrane</keyword>
<keyword id="KW-0602">Photosynthesis</keyword>
<keyword id="KW-0934">Plastid</keyword>
<keyword id="KW-1185">Reference proteome</keyword>
<keyword id="KW-0677">Repeat</keyword>
<keyword id="KW-0793">Thylakoid</keyword>
<keyword id="KW-0802">TPR repeat</keyword>
<feature type="chain" id="PRO_0000275639" description="Photosystem I assembly protein Ycf3">
    <location>
        <begin position="1"/>
        <end position="172"/>
    </location>
</feature>
<feature type="repeat" description="TPR 1">
    <location>
        <begin position="35"/>
        <end position="70"/>
    </location>
</feature>
<feature type="repeat" description="TPR 2">
    <location>
        <begin position="74"/>
        <end position="107"/>
    </location>
</feature>
<feature type="repeat" description="TPR 3">
    <location>
        <begin position="122"/>
        <end position="155"/>
    </location>
</feature>
<reference key="1">
    <citation type="journal article" date="2007" name="Theor. Appl. Genet.">
        <title>Complete chloroplast genome sequences of Hordeum vulgare, Sorghum bicolor and Agrostis stolonifera, and comparative analyses with other grass genomes.</title>
        <authorList>
            <person name="Saski C."/>
            <person name="Lee S.-B."/>
            <person name="Fjellheim S."/>
            <person name="Guda C."/>
            <person name="Jansen R.K."/>
            <person name="Luo H."/>
            <person name="Tomkins J."/>
            <person name="Rognli O.A."/>
            <person name="Daniell H."/>
            <person name="Clarke J.L."/>
        </authorList>
    </citation>
    <scope>NUCLEOTIDE SEQUENCE [LARGE SCALE GENOMIC DNA]</scope>
    <source>
        <strain>cv. BTx623</strain>
    </source>
</reference>
<organism>
    <name type="scientific">Sorghum bicolor</name>
    <name type="common">Sorghum</name>
    <name type="synonym">Sorghum vulgare</name>
    <dbReference type="NCBI Taxonomy" id="4558"/>
    <lineage>
        <taxon>Eukaryota</taxon>
        <taxon>Viridiplantae</taxon>
        <taxon>Streptophyta</taxon>
        <taxon>Embryophyta</taxon>
        <taxon>Tracheophyta</taxon>
        <taxon>Spermatophyta</taxon>
        <taxon>Magnoliopsida</taxon>
        <taxon>Liliopsida</taxon>
        <taxon>Poales</taxon>
        <taxon>Poaceae</taxon>
        <taxon>PACMAD clade</taxon>
        <taxon>Panicoideae</taxon>
        <taxon>Andropogonodae</taxon>
        <taxon>Andropogoneae</taxon>
        <taxon>Sorghinae</taxon>
        <taxon>Sorghum</taxon>
    </lineage>
</organism>
<name>YCF3_SORBI</name>
<gene>
    <name evidence="1" type="primary">ycf3</name>
</gene>
<evidence type="ECO:0000255" key="1">
    <source>
        <dbReference type="HAMAP-Rule" id="MF_00439"/>
    </source>
</evidence>